<dbReference type="EMBL" id="DP000541">
    <property type="protein sequence ID" value="ABY40780.1"/>
    <property type="molecule type" value="Genomic_DNA"/>
</dbReference>
<dbReference type="RefSeq" id="NP_001162409.1">
    <property type="nucleotide sequence ID" value="NM_001168938.1"/>
</dbReference>
<dbReference type="SMR" id="A9X185"/>
<dbReference type="STRING" id="9555.ENSPANP00000015997"/>
<dbReference type="GeneID" id="100137404"/>
<dbReference type="KEGG" id="panu:100137404"/>
<dbReference type="CTD" id="441161"/>
<dbReference type="eggNOG" id="ENOG502RU0M">
    <property type="taxonomic scope" value="Eukaryota"/>
</dbReference>
<dbReference type="OrthoDB" id="10720at314294"/>
<dbReference type="Proteomes" id="UP000028761">
    <property type="component" value="Unplaced"/>
</dbReference>
<dbReference type="GO" id="GO:0005938">
    <property type="term" value="C:cell cortex"/>
    <property type="evidence" value="ECO:0000250"/>
    <property type="project" value="UniProtKB"/>
</dbReference>
<dbReference type="GO" id="GO:0005737">
    <property type="term" value="C:cytoplasm"/>
    <property type="evidence" value="ECO:0000250"/>
    <property type="project" value="UniProtKB"/>
</dbReference>
<dbReference type="GO" id="GO:0140095">
    <property type="term" value="C:cytoplasmic lattice"/>
    <property type="evidence" value="ECO:0000250"/>
    <property type="project" value="UniProtKB"/>
</dbReference>
<dbReference type="GO" id="GO:0005634">
    <property type="term" value="C:nucleus"/>
    <property type="evidence" value="ECO:0000250"/>
    <property type="project" value="UniProtKB"/>
</dbReference>
<dbReference type="GO" id="GO:0032991">
    <property type="term" value="C:protein-containing complex"/>
    <property type="evidence" value="ECO:0007669"/>
    <property type="project" value="TreeGrafter"/>
</dbReference>
<dbReference type="GO" id="GO:0003723">
    <property type="term" value="F:RNA binding"/>
    <property type="evidence" value="ECO:0007669"/>
    <property type="project" value="InterPro"/>
</dbReference>
<dbReference type="GO" id="GO:0140094">
    <property type="term" value="F:structural constituent of cytoplasmic lattice"/>
    <property type="evidence" value="ECO:0000250"/>
    <property type="project" value="UniProtKB"/>
</dbReference>
<dbReference type="GO" id="GO:0007015">
    <property type="term" value="P:actin filament organization"/>
    <property type="evidence" value="ECO:0000250"/>
    <property type="project" value="UniProtKB"/>
</dbReference>
<dbReference type="GO" id="GO:0009880">
    <property type="term" value="P:embryonic pattern specification"/>
    <property type="evidence" value="ECO:0007669"/>
    <property type="project" value="TreeGrafter"/>
</dbReference>
<dbReference type="GO" id="GO:0051293">
    <property type="term" value="P:establishment of spindle localization"/>
    <property type="evidence" value="ECO:0000250"/>
    <property type="project" value="UniProtKB"/>
</dbReference>
<dbReference type="GO" id="GO:0035088">
    <property type="term" value="P:establishment or maintenance of apical/basal cell polarity"/>
    <property type="evidence" value="ECO:0007669"/>
    <property type="project" value="TreeGrafter"/>
</dbReference>
<dbReference type="GO" id="GO:2000781">
    <property type="term" value="P:positive regulation of double-strand break repair"/>
    <property type="evidence" value="ECO:0000250"/>
    <property type="project" value="UniProtKB"/>
</dbReference>
<dbReference type="GO" id="GO:1905168">
    <property type="term" value="P:positive regulation of double-strand break repair via homologous recombination"/>
    <property type="evidence" value="ECO:0000250"/>
    <property type="project" value="UniProtKB"/>
</dbReference>
<dbReference type="GO" id="GO:0045836">
    <property type="term" value="P:positive regulation of meiotic nuclear division"/>
    <property type="evidence" value="ECO:0000250"/>
    <property type="project" value="UniProtKB"/>
</dbReference>
<dbReference type="GO" id="GO:0140089">
    <property type="term" value="P:protein storage"/>
    <property type="evidence" value="ECO:0000250"/>
    <property type="project" value="UniProtKB"/>
</dbReference>
<dbReference type="GO" id="GO:0051302">
    <property type="term" value="P:regulation of cell division"/>
    <property type="evidence" value="ECO:0000250"/>
    <property type="project" value="UniProtKB"/>
</dbReference>
<dbReference type="GO" id="GO:0070201">
    <property type="term" value="P:regulation of establishment of protein localization"/>
    <property type="evidence" value="ECO:0000250"/>
    <property type="project" value="UniProtKB"/>
</dbReference>
<dbReference type="GO" id="GO:0032880">
    <property type="term" value="P:regulation of protein localization"/>
    <property type="evidence" value="ECO:0000250"/>
    <property type="project" value="UniProtKB"/>
</dbReference>
<dbReference type="GO" id="GO:0031297">
    <property type="term" value="P:replication fork processing"/>
    <property type="evidence" value="ECO:0000250"/>
    <property type="project" value="UniProtKB"/>
</dbReference>
<dbReference type="CDD" id="cd12795">
    <property type="entry name" value="FILIA_N_like"/>
    <property type="match status" value="1"/>
</dbReference>
<dbReference type="FunFam" id="3.30.1370.10:FF:000086">
    <property type="entry name" value="Oocyte-expressed protein homolog"/>
    <property type="match status" value="1"/>
</dbReference>
<dbReference type="Gene3D" id="3.30.1370.10">
    <property type="entry name" value="K Homology domain, type 1"/>
    <property type="match status" value="1"/>
</dbReference>
<dbReference type="InterPro" id="IPR036612">
    <property type="entry name" value="KH_dom_type_1_sf"/>
</dbReference>
<dbReference type="InterPro" id="IPR051778">
    <property type="entry name" value="KHDC1"/>
</dbReference>
<dbReference type="InterPro" id="IPR031952">
    <property type="entry name" value="MOEP19_KH-like"/>
</dbReference>
<dbReference type="PANTHER" id="PTHR19447:SF14">
    <property type="entry name" value="OOCYTE-EXPRESSED PROTEIN HOMOLOG"/>
    <property type="match status" value="1"/>
</dbReference>
<dbReference type="PANTHER" id="PTHR19447">
    <property type="entry name" value="OOCYTE-EXPRESSED PROTEIN HOMOLOG-RELATED"/>
    <property type="match status" value="1"/>
</dbReference>
<dbReference type="Pfam" id="PF16005">
    <property type="entry name" value="MOEP19"/>
    <property type="match status" value="1"/>
</dbReference>
<comment type="function">
    <text evidence="2">Component of the subcortical maternal complex (SCMC), a multiprotein complex that plays a key role in early embryonic development. The SCMC complex is a structural constituent of cytoplasmic lattices, which consist in fibrous structures found in the cytoplasm of oocytes and preimplantation embryos. They are required to store maternal proteins critical for embryonic development, such as proteins that control epigenetic reprogramming of the preimplantation embryo, and prevent their degradation or activation. As part of the OOEP-KHDC3 scaffold, recruits BLM and TRIM25 to DNA replication forks, thereby promoting the ubiquitination of BLM by TRIM25, enhancing BLM retainment at replication forks and therefore promoting stalled replication fork restart. Positively regulates the homologous recombination-mediated DNA double-strand break (DSB) repair pathway by regulating ATM activation and RAD51 recruitment to DSBs in oocytes. Thereby contributes to oocyte survival and the resumption and completion of meiosis.</text>
</comment>
<comment type="subunit">
    <text evidence="1 2">Component of the subcortical maternal complex (SCMC), at least composed of NLRP5, KHDC3, OOEP, and TLE6 (By similarity). Within the complex, interacts with NLRP5, KHDC3 and TLE6 (By similarity). As part of the SCMC interacts with the SCMC-associated protein NLRP4F (By similarity). The SCMC may facilitate translocation of its components between the nuclear and cytoplasmic compartments (By similarity). Forms a scaffold complex with KHDC3/FILIA, and interacts with BLM and TRIM25 at DNA replication forks (By similarity).</text>
</comment>
<comment type="subcellular location">
    <subcellularLocation>
        <location evidence="2">Cytoplasm</location>
    </subcellularLocation>
    <subcellularLocation>
        <location evidence="2">Nucleus</location>
    </subcellularLocation>
    <text evidence="2">Core component of cytoplasmic lattices in oocytes. In the subcortical cytoplasm of early embryos from the 1-cell to the blastocyst stages. From the 2-cell stage, still detected in the subcortex, but excluded from cell-cell contact regions. Expression largely disappears in blastocysts.</text>
</comment>
<comment type="domain">
    <text>Contains an atypical KH domain with amino acid changes at critical sites, suggesting that it may not bind RNA.</text>
</comment>
<comment type="similarity">
    <text evidence="4">Belongs to the KHDC1 family.</text>
</comment>
<sequence>MVDDAGTAESQRGKQTPADSLEQLRMLPLPPPQIRIRPWWFPVQELRDPLVFYLEAWLADELFGPDRAMIPEMEWTSQALMTVDIVDSGNLVEITVFGRPSVQNRVKSMLLCLASFHREHRARAEKMKHLEKNLKAHASDPHSPQDPVA</sequence>
<name>OOEP_PAPAN</name>
<gene>
    <name type="primary">OOEP</name>
</gene>
<keyword id="KW-0963">Cytoplasm</keyword>
<keyword id="KW-0539">Nucleus</keyword>
<keyword id="KW-1185">Reference proteome</keyword>
<organism>
    <name type="scientific">Papio anubis</name>
    <name type="common">Olive baboon</name>
    <dbReference type="NCBI Taxonomy" id="9555"/>
    <lineage>
        <taxon>Eukaryota</taxon>
        <taxon>Metazoa</taxon>
        <taxon>Chordata</taxon>
        <taxon>Craniata</taxon>
        <taxon>Vertebrata</taxon>
        <taxon>Euteleostomi</taxon>
        <taxon>Mammalia</taxon>
        <taxon>Eutheria</taxon>
        <taxon>Euarchontoglires</taxon>
        <taxon>Primates</taxon>
        <taxon>Haplorrhini</taxon>
        <taxon>Catarrhini</taxon>
        <taxon>Cercopithecidae</taxon>
        <taxon>Cercopithecinae</taxon>
        <taxon>Papio</taxon>
    </lineage>
</organism>
<proteinExistence type="inferred from homology"/>
<accession>A9X185</accession>
<evidence type="ECO:0000250" key="1">
    <source>
        <dbReference type="UniProtKB" id="A6NGQ2"/>
    </source>
</evidence>
<evidence type="ECO:0000250" key="2">
    <source>
        <dbReference type="UniProtKB" id="Q9CWE6"/>
    </source>
</evidence>
<evidence type="ECO:0000256" key="3">
    <source>
        <dbReference type="SAM" id="MobiDB-lite"/>
    </source>
</evidence>
<evidence type="ECO:0000305" key="4"/>
<protein>
    <recommendedName>
        <fullName>Oocyte-expressed protein homolog</fullName>
    </recommendedName>
</protein>
<reference key="1">
    <citation type="submission" date="2007-11" db="EMBL/GenBank/DDBJ databases">
        <title>NISC comparative sequencing initiative.</title>
        <authorList>
            <person name="Antonellis A."/>
            <person name="Benjamin B."/>
            <person name="Blakesley R.W."/>
            <person name="Bouffard G.G."/>
            <person name="Brinkley C."/>
            <person name="Brooks S."/>
            <person name="Chu G."/>
            <person name="Chub I."/>
            <person name="Coleman H."/>
            <person name="Fuksenko T."/>
            <person name="Gestole M."/>
            <person name="Gregory M."/>
            <person name="Guan X."/>
            <person name="Gupta J."/>
            <person name="Gurson N."/>
            <person name="Han E."/>
            <person name="Han J."/>
            <person name="Hansen N."/>
            <person name="Hargrove A."/>
            <person name="Hines-Harris K."/>
            <person name="Ho S.-L."/>
            <person name="Hu P."/>
            <person name="Hunter G."/>
            <person name="Hurle B."/>
            <person name="Idol J.R."/>
            <person name="Johnson T."/>
            <person name="Knight E."/>
            <person name="Kwong P."/>
            <person name="Lee-Lin S.-Q."/>
            <person name="Legaspi R."/>
            <person name="Madden M."/>
            <person name="Maduro Q.L."/>
            <person name="Maduro V.B."/>
            <person name="Margulies E.H."/>
            <person name="Masiello C."/>
            <person name="Maskeri B."/>
            <person name="McDowell J."/>
            <person name="Merkulov G."/>
            <person name="Montemayor C."/>
            <person name="Mullikin J.C."/>
            <person name="Park M."/>
            <person name="Prasad A."/>
            <person name="Ramsahoye C."/>
            <person name="Reddix-Dugue N."/>
            <person name="Riebow N."/>
            <person name="Schandler K."/>
            <person name="Schueler M.G."/>
            <person name="Sison C."/>
            <person name="Smith L."/>
            <person name="Stantripop S."/>
            <person name="Thomas J.W."/>
            <person name="Thomas P.J."/>
            <person name="Tsipouri V."/>
            <person name="Young A."/>
            <person name="Green E.D."/>
        </authorList>
    </citation>
    <scope>NUCLEOTIDE SEQUENCE [LARGE SCALE GENOMIC DNA]</scope>
</reference>
<feature type="chain" id="PRO_0000328804" description="Oocyte-expressed protein homolog">
    <location>
        <begin position="1"/>
        <end position="149"/>
    </location>
</feature>
<feature type="domain" description="KH; atypical">
    <location>
        <begin position="49"/>
        <end position="110"/>
    </location>
</feature>
<feature type="region of interest" description="Disordered" evidence="3">
    <location>
        <begin position="1"/>
        <end position="23"/>
    </location>
</feature>
<feature type="compositionally biased region" description="Polar residues" evidence="3">
    <location>
        <begin position="8"/>
        <end position="18"/>
    </location>
</feature>